<protein>
    <recommendedName>
        <fullName evidence="1">Isopentenyl-diphosphate delta-isomerase</fullName>
        <shortName evidence="1">IPP isomerase</shortName>
        <ecNumber evidence="1">5.3.3.2</ecNumber>
    </recommendedName>
    <alternativeName>
        <fullName evidence="1">Isopentenyl diphosphate:dimethylallyl diphosphate isomerase</fullName>
    </alternativeName>
    <alternativeName>
        <fullName evidence="1">Isopentenyl pyrophosphate isomerase</fullName>
    </alternativeName>
    <alternativeName>
        <fullName evidence="1">Type 2 isopentenyl diphosphate isomerase</fullName>
        <shortName evidence="1">IDI-2</shortName>
    </alternativeName>
</protein>
<organism>
    <name type="scientific">Streptococcus pneumoniae (strain ATCC BAA-255 / R6)</name>
    <dbReference type="NCBI Taxonomy" id="171101"/>
    <lineage>
        <taxon>Bacteria</taxon>
        <taxon>Bacillati</taxon>
        <taxon>Bacillota</taxon>
        <taxon>Bacilli</taxon>
        <taxon>Lactobacillales</taxon>
        <taxon>Streptococcaceae</taxon>
        <taxon>Streptococcus</taxon>
    </lineage>
</organism>
<comment type="function">
    <text evidence="1">Involved in the biosynthesis of isoprenoids. Catalyzes the 1,3-allylic rearrangement of the homoallylic substrate isopentenyl (IPP) to its allylic isomer, dimethylallyl diphosphate (DMAPP).</text>
</comment>
<comment type="catalytic activity">
    <reaction evidence="1">
        <text>isopentenyl diphosphate = dimethylallyl diphosphate</text>
        <dbReference type="Rhea" id="RHEA:23284"/>
        <dbReference type="ChEBI" id="CHEBI:57623"/>
        <dbReference type="ChEBI" id="CHEBI:128769"/>
        <dbReference type="EC" id="5.3.3.2"/>
    </reaction>
</comment>
<comment type="cofactor">
    <cofactor evidence="1">
        <name>FMN</name>
        <dbReference type="ChEBI" id="CHEBI:58210"/>
    </cofactor>
</comment>
<comment type="cofactor">
    <cofactor evidence="1">
        <name>NADPH</name>
        <dbReference type="ChEBI" id="CHEBI:57783"/>
    </cofactor>
</comment>
<comment type="cofactor">
    <cofactor evidence="1">
        <name>Mg(2+)</name>
        <dbReference type="ChEBI" id="CHEBI:18420"/>
    </cofactor>
</comment>
<comment type="subunit">
    <text evidence="1">Homooctamer. Dimer of tetramers.</text>
</comment>
<comment type="subcellular location">
    <subcellularLocation>
        <location evidence="1">Cytoplasm</location>
    </subcellularLocation>
</comment>
<comment type="similarity">
    <text evidence="1">Belongs to the IPP isomerase type 2 family.</text>
</comment>
<feature type="chain" id="PRO_0000134432" description="Isopentenyl-diphosphate delta-isomerase">
    <location>
        <begin position="1"/>
        <end position="336"/>
    </location>
</feature>
<feature type="binding site" evidence="1">
    <location>
        <begin position="5"/>
        <end position="6"/>
    </location>
    <ligand>
        <name>substrate</name>
    </ligand>
</feature>
<feature type="binding site" evidence="1">
    <location>
        <begin position="60"/>
        <end position="62"/>
    </location>
    <ligand>
        <name>FMN</name>
        <dbReference type="ChEBI" id="CHEBI:58210"/>
    </ligand>
</feature>
<feature type="binding site" evidence="1">
    <location>
        <position position="90"/>
    </location>
    <ligand>
        <name>FMN</name>
        <dbReference type="ChEBI" id="CHEBI:58210"/>
    </ligand>
</feature>
<feature type="binding site" evidence="1">
    <location>
        <position position="117"/>
    </location>
    <ligand>
        <name>FMN</name>
        <dbReference type="ChEBI" id="CHEBI:58210"/>
    </ligand>
</feature>
<feature type="binding site" evidence="1">
    <location>
        <position position="147"/>
    </location>
    <ligand>
        <name>substrate</name>
    </ligand>
</feature>
<feature type="binding site" evidence="1">
    <location>
        <position position="148"/>
    </location>
    <ligand>
        <name>Mg(2+)</name>
        <dbReference type="ChEBI" id="CHEBI:18420"/>
    </ligand>
</feature>
<feature type="binding site" evidence="1">
    <location>
        <position position="179"/>
    </location>
    <ligand>
        <name>FMN</name>
        <dbReference type="ChEBI" id="CHEBI:58210"/>
    </ligand>
</feature>
<feature type="binding site" evidence="1">
    <location>
        <position position="204"/>
    </location>
    <ligand>
        <name>FMN</name>
        <dbReference type="ChEBI" id="CHEBI:58210"/>
    </ligand>
</feature>
<feature type="binding site" evidence="1">
    <location>
        <position position="209"/>
    </location>
    <ligand>
        <name>FMN</name>
        <dbReference type="ChEBI" id="CHEBI:58210"/>
    </ligand>
</feature>
<feature type="binding site" evidence="1">
    <location>
        <begin position="253"/>
        <end position="255"/>
    </location>
    <ligand>
        <name>FMN</name>
        <dbReference type="ChEBI" id="CHEBI:58210"/>
    </ligand>
</feature>
<feature type="binding site" evidence="1">
    <location>
        <begin position="274"/>
        <end position="275"/>
    </location>
    <ligand>
        <name>FMN</name>
        <dbReference type="ChEBI" id="CHEBI:58210"/>
    </ligand>
</feature>
<gene>
    <name evidence="1" type="primary">fni</name>
    <name type="ordered locus">spr0341</name>
</gene>
<reference key="1">
    <citation type="journal article" date="2001" name="J. Bacteriol.">
        <title>Genome of the bacterium Streptococcus pneumoniae strain R6.</title>
        <authorList>
            <person name="Hoskins J."/>
            <person name="Alborn W.E. Jr."/>
            <person name="Arnold J."/>
            <person name="Blaszczak L.C."/>
            <person name="Burgett S."/>
            <person name="DeHoff B.S."/>
            <person name="Estrem S.T."/>
            <person name="Fritz L."/>
            <person name="Fu D.-J."/>
            <person name="Fuller W."/>
            <person name="Geringer C."/>
            <person name="Gilmour R."/>
            <person name="Glass J.S."/>
            <person name="Khoja H."/>
            <person name="Kraft A.R."/>
            <person name="Lagace R.E."/>
            <person name="LeBlanc D.J."/>
            <person name="Lee L.N."/>
            <person name="Lefkowitz E.J."/>
            <person name="Lu J."/>
            <person name="Matsushima P."/>
            <person name="McAhren S.M."/>
            <person name="McHenney M."/>
            <person name="McLeaster K."/>
            <person name="Mundy C.W."/>
            <person name="Nicas T.I."/>
            <person name="Norris F.H."/>
            <person name="O'Gara M."/>
            <person name="Peery R.B."/>
            <person name="Robertson G.T."/>
            <person name="Rockey P."/>
            <person name="Sun P.-M."/>
            <person name="Winkler M.E."/>
            <person name="Yang Y."/>
            <person name="Young-Bellido M."/>
            <person name="Zhao G."/>
            <person name="Zook C.A."/>
            <person name="Baltz R.H."/>
            <person name="Jaskunas S.R."/>
            <person name="Rosteck P.R. Jr."/>
            <person name="Skatrud P.L."/>
            <person name="Glass J.I."/>
        </authorList>
    </citation>
    <scope>NUCLEOTIDE SEQUENCE [LARGE SCALE GENOMIC DNA]</scope>
    <source>
        <strain>ATCC BAA-255 / R6</strain>
    </source>
</reference>
<dbReference type="EC" id="5.3.3.2" evidence="1"/>
<dbReference type="EMBL" id="AE007317">
    <property type="protein sequence ID" value="AAK99145.1"/>
    <property type="molecule type" value="Genomic_DNA"/>
</dbReference>
<dbReference type="PIR" id="E97914">
    <property type="entry name" value="E97914"/>
</dbReference>
<dbReference type="RefSeq" id="NP_357935.1">
    <property type="nucleotide sequence ID" value="NC_003098.1"/>
</dbReference>
<dbReference type="RefSeq" id="WP_000210629.1">
    <property type="nucleotide sequence ID" value="NC_003098.1"/>
</dbReference>
<dbReference type="SMR" id="Q8DR48"/>
<dbReference type="STRING" id="171101.spr0341"/>
<dbReference type="KEGG" id="spr:spr0341"/>
<dbReference type="PATRIC" id="fig|171101.6.peg.381"/>
<dbReference type="eggNOG" id="COG1304">
    <property type="taxonomic scope" value="Bacteria"/>
</dbReference>
<dbReference type="HOGENOM" id="CLU_065515_0_0_9"/>
<dbReference type="Proteomes" id="UP000000586">
    <property type="component" value="Chromosome"/>
</dbReference>
<dbReference type="GO" id="GO:0005737">
    <property type="term" value="C:cytoplasm"/>
    <property type="evidence" value="ECO:0007669"/>
    <property type="project" value="UniProtKB-SubCell"/>
</dbReference>
<dbReference type="GO" id="GO:0010181">
    <property type="term" value="F:FMN binding"/>
    <property type="evidence" value="ECO:0007669"/>
    <property type="project" value="UniProtKB-UniRule"/>
</dbReference>
<dbReference type="GO" id="GO:0004452">
    <property type="term" value="F:isopentenyl-diphosphate delta-isomerase activity"/>
    <property type="evidence" value="ECO:0007669"/>
    <property type="project" value="UniProtKB-UniRule"/>
</dbReference>
<dbReference type="GO" id="GO:0000287">
    <property type="term" value="F:magnesium ion binding"/>
    <property type="evidence" value="ECO:0007669"/>
    <property type="project" value="UniProtKB-UniRule"/>
</dbReference>
<dbReference type="GO" id="GO:0070402">
    <property type="term" value="F:NADPH binding"/>
    <property type="evidence" value="ECO:0007669"/>
    <property type="project" value="UniProtKB-UniRule"/>
</dbReference>
<dbReference type="GO" id="GO:0016491">
    <property type="term" value="F:oxidoreductase activity"/>
    <property type="evidence" value="ECO:0007669"/>
    <property type="project" value="InterPro"/>
</dbReference>
<dbReference type="GO" id="GO:0008299">
    <property type="term" value="P:isoprenoid biosynthetic process"/>
    <property type="evidence" value="ECO:0007669"/>
    <property type="project" value="UniProtKB-UniRule"/>
</dbReference>
<dbReference type="CDD" id="cd02811">
    <property type="entry name" value="IDI-2_FMN"/>
    <property type="match status" value="1"/>
</dbReference>
<dbReference type="Gene3D" id="3.20.20.70">
    <property type="entry name" value="Aldolase class I"/>
    <property type="match status" value="1"/>
</dbReference>
<dbReference type="HAMAP" id="MF_00354">
    <property type="entry name" value="Idi_2"/>
    <property type="match status" value="1"/>
</dbReference>
<dbReference type="InterPro" id="IPR013785">
    <property type="entry name" value="Aldolase_TIM"/>
</dbReference>
<dbReference type="InterPro" id="IPR000262">
    <property type="entry name" value="FMN-dep_DH"/>
</dbReference>
<dbReference type="InterPro" id="IPR011179">
    <property type="entry name" value="IPdP_isomerase"/>
</dbReference>
<dbReference type="NCBIfam" id="TIGR02151">
    <property type="entry name" value="IPP_isom_2"/>
    <property type="match status" value="1"/>
</dbReference>
<dbReference type="PANTHER" id="PTHR43665">
    <property type="entry name" value="ISOPENTENYL-DIPHOSPHATE DELTA-ISOMERASE"/>
    <property type="match status" value="1"/>
</dbReference>
<dbReference type="PANTHER" id="PTHR43665:SF1">
    <property type="entry name" value="ISOPENTENYL-DIPHOSPHATE DELTA-ISOMERASE"/>
    <property type="match status" value="1"/>
</dbReference>
<dbReference type="Pfam" id="PF01070">
    <property type="entry name" value="FMN_dh"/>
    <property type="match status" value="1"/>
</dbReference>
<dbReference type="PIRSF" id="PIRSF003314">
    <property type="entry name" value="IPP_isomerase"/>
    <property type="match status" value="1"/>
</dbReference>
<dbReference type="SUPFAM" id="SSF51395">
    <property type="entry name" value="FMN-linked oxidoreductases"/>
    <property type="match status" value="1"/>
</dbReference>
<evidence type="ECO:0000255" key="1">
    <source>
        <dbReference type="HAMAP-Rule" id="MF_00354"/>
    </source>
</evidence>
<proteinExistence type="inferred from homology"/>
<name>IDI2_STRR6</name>
<keyword id="KW-0963">Cytoplasm</keyword>
<keyword id="KW-0285">Flavoprotein</keyword>
<keyword id="KW-0288">FMN</keyword>
<keyword id="KW-0413">Isomerase</keyword>
<keyword id="KW-0414">Isoprene biosynthesis</keyword>
<keyword id="KW-0460">Magnesium</keyword>
<keyword id="KW-0479">Metal-binding</keyword>
<keyword id="KW-0521">NADP</keyword>
<keyword id="KW-1185">Reference proteome</keyword>
<sequence>MTTNRKDEHILYALEQKSSYNSFDEVELIHSSLPLYNLDEIDLSTEFAGRKWDFPFYINAMTGGSNKGREINQKLAQVAETCGILFVTGSYSAALKNPTDDSFSVKSSHPNLLLGTNIGLDKPVELGLQTVEEMNPVLLQVHVNVMQELLMPEGERKFRSWQSHLADYSKQIPVPIVLKEVGFGMDAKTIERAYEFGVRTVDLSGRGGTSFAYIENRRSGQRDYLNQWGQSTMQALLNAQEWKDKVELLVSGGVRNPLDMIKCLVFGAKAVGLSRTVLELVETYTVEEVIGIVQGWKADLRLIMCSLNCATIADLQKVDYLLYGKLKEANDQMKKA</sequence>
<accession>Q8DR48</accession>